<feature type="chain" id="PRO_0000102777" description="Ribosome-binding factor A">
    <location>
        <begin position="1" status="less than"/>
        <end position="133"/>
    </location>
</feature>
<feature type="non-terminal residue">
    <location>
        <position position="1"/>
    </location>
</feature>
<protein>
    <recommendedName>
        <fullName evidence="1">Ribosome-binding factor A</fullName>
    </recommendedName>
</protein>
<accession>O34272</accession>
<proteinExistence type="inferred from homology"/>
<organism>
    <name type="scientific">Yersinia enterocolitica</name>
    <dbReference type="NCBI Taxonomy" id="630"/>
    <lineage>
        <taxon>Bacteria</taxon>
        <taxon>Pseudomonadati</taxon>
        <taxon>Pseudomonadota</taxon>
        <taxon>Gammaproteobacteria</taxon>
        <taxon>Enterobacterales</taxon>
        <taxon>Yersiniaceae</taxon>
        <taxon>Yersinia</taxon>
    </lineage>
</organism>
<sequence>EFSRSQRVSQEMQKEIALILQREIKDPRVGMATVSGIELSRDLAYAKVFVTFLNVLTDNADPDTAKNGIKALQDASGYIRTLLGKAMRLRIVPELTFAYDNSLIEGMRMSNLVTNVIKNDVERQVNPGSDEEK</sequence>
<reference key="1">
    <citation type="journal article" date="1998" name="Mol. Microbiol.">
        <title>The psychrotrophic bacterium Yersinia enterocolitica requires expression of pnp, the gene for polynucleotide phosphorylase, for growth at low temperature (5 degrees C).</title>
        <authorList>
            <person name="Goverde R.L.J."/>
            <person name="Huis in't Veld J.H.J."/>
            <person name="Kusters H.G."/>
            <person name="Mooi F.R."/>
        </authorList>
    </citation>
    <scope>NUCLEOTIDE SEQUENCE [GENOMIC DNA]</scope>
</reference>
<name>RBFA_YEREN</name>
<evidence type="ECO:0000255" key="1">
    <source>
        <dbReference type="HAMAP-Rule" id="MF_00003"/>
    </source>
</evidence>
<keyword id="KW-0963">Cytoplasm</keyword>
<keyword id="KW-0690">Ribosome biogenesis</keyword>
<dbReference type="EMBL" id="Y10692">
    <property type="protein sequence ID" value="CAA71698.1"/>
    <property type="molecule type" value="Genomic_DNA"/>
</dbReference>
<dbReference type="SMR" id="O34272"/>
<dbReference type="STRING" id="1443113.LC20_04737"/>
<dbReference type="eggNOG" id="COG0858">
    <property type="taxonomic scope" value="Bacteria"/>
</dbReference>
<dbReference type="GO" id="GO:0005829">
    <property type="term" value="C:cytosol"/>
    <property type="evidence" value="ECO:0007669"/>
    <property type="project" value="TreeGrafter"/>
</dbReference>
<dbReference type="GO" id="GO:0043024">
    <property type="term" value="F:ribosomal small subunit binding"/>
    <property type="evidence" value="ECO:0007669"/>
    <property type="project" value="TreeGrafter"/>
</dbReference>
<dbReference type="GO" id="GO:0006364">
    <property type="term" value="P:rRNA processing"/>
    <property type="evidence" value="ECO:0007669"/>
    <property type="project" value="InterPro"/>
</dbReference>
<dbReference type="FunFam" id="3.30.300.20:FF:000007">
    <property type="entry name" value="Ribosome-binding factor A"/>
    <property type="match status" value="1"/>
</dbReference>
<dbReference type="Gene3D" id="3.30.300.20">
    <property type="match status" value="1"/>
</dbReference>
<dbReference type="HAMAP" id="MF_00003">
    <property type="entry name" value="RbfA"/>
    <property type="match status" value="1"/>
</dbReference>
<dbReference type="InterPro" id="IPR015946">
    <property type="entry name" value="KH_dom-like_a/b"/>
</dbReference>
<dbReference type="InterPro" id="IPR000238">
    <property type="entry name" value="RbfA"/>
</dbReference>
<dbReference type="InterPro" id="IPR023799">
    <property type="entry name" value="RbfA_dom_sf"/>
</dbReference>
<dbReference type="InterPro" id="IPR020053">
    <property type="entry name" value="Ribosome-bd_factorA_CS"/>
</dbReference>
<dbReference type="NCBIfam" id="TIGR00082">
    <property type="entry name" value="rbfA"/>
    <property type="match status" value="1"/>
</dbReference>
<dbReference type="PANTHER" id="PTHR33515">
    <property type="entry name" value="RIBOSOME-BINDING FACTOR A, CHLOROPLASTIC-RELATED"/>
    <property type="match status" value="1"/>
</dbReference>
<dbReference type="PANTHER" id="PTHR33515:SF1">
    <property type="entry name" value="RIBOSOME-BINDING FACTOR A, CHLOROPLASTIC-RELATED"/>
    <property type="match status" value="1"/>
</dbReference>
<dbReference type="Pfam" id="PF02033">
    <property type="entry name" value="RBFA"/>
    <property type="match status" value="1"/>
</dbReference>
<dbReference type="SUPFAM" id="SSF89919">
    <property type="entry name" value="Ribosome-binding factor A, RbfA"/>
    <property type="match status" value="1"/>
</dbReference>
<dbReference type="PROSITE" id="PS01319">
    <property type="entry name" value="RBFA"/>
    <property type="match status" value="1"/>
</dbReference>
<gene>
    <name evidence="1" type="primary">rbfA</name>
</gene>
<comment type="function">
    <text evidence="1">One of several proteins that assist in the late maturation steps of the functional core of the 30S ribosomal subunit. Associates with free 30S ribosomal subunits (but not with 30S subunits that are part of 70S ribosomes or polysomes). Required for efficient processing of 16S rRNA. May interact with the 5'-terminal helix region of 16S rRNA.</text>
</comment>
<comment type="subunit">
    <text evidence="1">Monomer. Binds 30S ribosomal subunits, but not 50S ribosomal subunits or 70S ribosomes.</text>
</comment>
<comment type="subcellular location">
    <subcellularLocation>
        <location evidence="1">Cytoplasm</location>
    </subcellularLocation>
</comment>
<comment type="similarity">
    <text evidence="1">Belongs to the RbfA family.</text>
</comment>